<accession>Q925W4</accession>
<name>Y1253_LISIN</name>
<protein>
    <recommendedName>
        <fullName>Uncharacterized protein Lin1253/Lin1744</fullName>
    </recommendedName>
</protein>
<gene>
    <name type="ordered locus">lin1253</name>
</gene>
<gene>
    <name type="ordered locus">lin1744</name>
</gene>
<comment type="similarity">
    <text evidence="1">To S.faecalis plasmid PAM373 EP0012.</text>
</comment>
<reference key="1">
    <citation type="journal article" date="2001" name="Science">
        <title>Comparative genomics of Listeria species.</title>
        <authorList>
            <person name="Glaser P."/>
            <person name="Frangeul L."/>
            <person name="Buchrieser C."/>
            <person name="Rusniok C."/>
            <person name="Amend A."/>
            <person name="Baquero F."/>
            <person name="Berche P."/>
            <person name="Bloecker H."/>
            <person name="Brandt P."/>
            <person name="Chakraborty T."/>
            <person name="Charbit A."/>
            <person name="Chetouani F."/>
            <person name="Couve E."/>
            <person name="de Daruvar A."/>
            <person name="Dehoux P."/>
            <person name="Domann E."/>
            <person name="Dominguez-Bernal G."/>
            <person name="Duchaud E."/>
            <person name="Durant L."/>
            <person name="Dussurget O."/>
            <person name="Entian K.-D."/>
            <person name="Fsihi H."/>
            <person name="Garcia-del Portillo F."/>
            <person name="Garrido P."/>
            <person name="Gautier L."/>
            <person name="Goebel W."/>
            <person name="Gomez-Lopez N."/>
            <person name="Hain T."/>
            <person name="Hauf J."/>
            <person name="Jackson D."/>
            <person name="Jones L.-M."/>
            <person name="Kaerst U."/>
            <person name="Kreft J."/>
            <person name="Kuhn M."/>
            <person name="Kunst F."/>
            <person name="Kurapkat G."/>
            <person name="Madueno E."/>
            <person name="Maitournam A."/>
            <person name="Mata Vicente J."/>
            <person name="Ng E."/>
            <person name="Nedjari H."/>
            <person name="Nordsiek G."/>
            <person name="Novella S."/>
            <person name="de Pablos B."/>
            <person name="Perez-Diaz J.-C."/>
            <person name="Purcell R."/>
            <person name="Remmel B."/>
            <person name="Rose M."/>
            <person name="Schlueter T."/>
            <person name="Simoes N."/>
            <person name="Tierrez A."/>
            <person name="Vazquez-Boland J.-A."/>
            <person name="Voss H."/>
            <person name="Wehland J."/>
            <person name="Cossart P."/>
        </authorList>
    </citation>
    <scope>NUCLEOTIDE SEQUENCE [LARGE SCALE GENOMIC DNA]</scope>
    <source>
        <strain>ATCC BAA-680 / CLIP 11262</strain>
    </source>
</reference>
<dbReference type="EMBL" id="AL596168">
    <property type="protein sequence ID" value="CAC96484.1"/>
    <property type="molecule type" value="Genomic_DNA"/>
</dbReference>
<dbReference type="EMBL" id="AL596169">
    <property type="protein sequence ID" value="CAC96975.1"/>
    <property type="molecule type" value="Genomic_DNA"/>
</dbReference>
<dbReference type="PIR" id="AD1589">
    <property type="entry name" value="AD1589"/>
</dbReference>
<dbReference type="PIR" id="AG1650">
    <property type="entry name" value="AG1650"/>
</dbReference>
<dbReference type="RefSeq" id="WP_010990866.1">
    <property type="nucleotide sequence ID" value="NC_003212.1"/>
</dbReference>
<dbReference type="STRING" id="272626.gene:17565584"/>
<dbReference type="KEGG" id="lin:lin1253"/>
<dbReference type="KEGG" id="lin:lin1744"/>
<dbReference type="eggNOG" id="ENOG502Z9PR">
    <property type="taxonomic scope" value="Bacteria"/>
</dbReference>
<dbReference type="HOGENOM" id="CLU_059853_0_0_9"/>
<dbReference type="OrthoDB" id="1802755at2"/>
<dbReference type="Proteomes" id="UP000002513">
    <property type="component" value="Chromosome"/>
</dbReference>
<dbReference type="InterPro" id="IPR025586">
    <property type="entry name" value="PcfJ"/>
</dbReference>
<dbReference type="Pfam" id="PF14284">
    <property type="entry name" value="PcfJ"/>
    <property type="match status" value="1"/>
</dbReference>
<sequence>MKREARNYIDNKLKPPKAFFDWCFSQIPTYKWSNKKETILASNRKNCSVIEQKLRKNSRLTFFGKLNVFGIVLVTSKRIEIQSYAFWNRVVEGKEMIEFDLVNFEQFADGEHVKVAISDGKMWFGLIPIYGGMSGGPYSMIRLFENDWKEKIRSKSELKYLEIPHLDFKEIETIYKYRVEIEFLQKIKARQLSKEVMYPVTQYTNGSFRKTVDMRTINAKWLKENKPFFKNSDRGFMEFELARRIQKRRGKVVSGIEKYLDYRAINKIPEGVGIVRFQNWIIKNKVDFSYYLDYLNLMRDLNIAIDSENIIMPKNLVIAHDNAVKLLYQMKHEVEEQQYKMRFEKIKDLEKTIDNYAFIVPKQASDLLTEGKALSHCVGGSNYIKQHIEGKTTIIFVRDKQYLEKSLYTLEYKNGQIYQLRGKHNCEPTHDVQEAANNWAASVKSKTKVLQHS</sequence>
<feature type="chain" id="PRO_0000210811" description="Uncharacterized protein Lin1253/Lin1744">
    <location>
        <begin position="1"/>
        <end position="453"/>
    </location>
</feature>
<proteinExistence type="predicted"/>
<organism>
    <name type="scientific">Listeria innocua serovar 6a (strain ATCC BAA-680 / CLIP 11262)</name>
    <dbReference type="NCBI Taxonomy" id="272626"/>
    <lineage>
        <taxon>Bacteria</taxon>
        <taxon>Bacillati</taxon>
        <taxon>Bacillota</taxon>
        <taxon>Bacilli</taxon>
        <taxon>Bacillales</taxon>
        <taxon>Listeriaceae</taxon>
        <taxon>Listeria</taxon>
    </lineage>
</organism>
<evidence type="ECO:0000305" key="1"/>